<name>Y090_PSEE4</name>
<evidence type="ECO:0000255" key="1">
    <source>
        <dbReference type="HAMAP-Rule" id="MF_01361"/>
    </source>
</evidence>
<comment type="subcellular location">
    <subcellularLocation>
        <location evidence="1">Cell membrane</location>
        <topology evidence="1">Multi-pass membrane protein</topology>
    </subcellularLocation>
</comment>
<comment type="similarity">
    <text evidence="1">Belongs to the UPF0391 family.</text>
</comment>
<proteinExistence type="inferred from homology"/>
<dbReference type="EMBL" id="CT573326">
    <property type="protein sequence ID" value="CAK13082.1"/>
    <property type="molecule type" value="Genomic_DNA"/>
</dbReference>
<dbReference type="STRING" id="384676.PSEEN0090"/>
<dbReference type="KEGG" id="pen:PSEEN0090"/>
<dbReference type="eggNOG" id="COG5487">
    <property type="taxonomic scope" value="Bacteria"/>
</dbReference>
<dbReference type="HOGENOM" id="CLU_187346_2_1_6"/>
<dbReference type="Proteomes" id="UP000000658">
    <property type="component" value="Chromosome"/>
</dbReference>
<dbReference type="GO" id="GO:0005886">
    <property type="term" value="C:plasma membrane"/>
    <property type="evidence" value="ECO:0007669"/>
    <property type="project" value="UniProtKB-SubCell"/>
</dbReference>
<dbReference type="HAMAP" id="MF_01361">
    <property type="entry name" value="UPF0391"/>
    <property type="match status" value="1"/>
</dbReference>
<dbReference type="InterPro" id="IPR009760">
    <property type="entry name" value="DUF1328"/>
</dbReference>
<dbReference type="NCBIfam" id="NF010226">
    <property type="entry name" value="PRK13682.1-1"/>
    <property type="match status" value="1"/>
</dbReference>
<dbReference type="NCBIfam" id="NF010229">
    <property type="entry name" value="PRK13682.1-4"/>
    <property type="match status" value="1"/>
</dbReference>
<dbReference type="Pfam" id="PF07043">
    <property type="entry name" value="DUF1328"/>
    <property type="match status" value="1"/>
</dbReference>
<dbReference type="PIRSF" id="PIRSF036466">
    <property type="entry name" value="UCP036466"/>
    <property type="match status" value="1"/>
</dbReference>
<keyword id="KW-1003">Cell membrane</keyword>
<keyword id="KW-0472">Membrane</keyword>
<keyword id="KW-0812">Transmembrane</keyword>
<keyword id="KW-1133">Transmembrane helix</keyword>
<sequence>MLSWAITFLIIAIVAAVLGFGGIAGAATGIAKILFIIFLVLFVASFFFGRGRG</sequence>
<reference key="1">
    <citation type="journal article" date="2006" name="Nat. Biotechnol.">
        <title>Complete genome sequence of the entomopathogenic and metabolically versatile soil bacterium Pseudomonas entomophila.</title>
        <authorList>
            <person name="Vodovar N."/>
            <person name="Vallenet D."/>
            <person name="Cruveiller S."/>
            <person name="Rouy Z."/>
            <person name="Barbe V."/>
            <person name="Acosta C."/>
            <person name="Cattolico L."/>
            <person name="Jubin C."/>
            <person name="Lajus A."/>
            <person name="Segurens B."/>
            <person name="Vacherie B."/>
            <person name="Wincker P."/>
            <person name="Weissenbach J."/>
            <person name="Lemaitre B."/>
            <person name="Medigue C."/>
            <person name="Boccard F."/>
        </authorList>
    </citation>
    <scope>NUCLEOTIDE SEQUENCE [LARGE SCALE GENOMIC DNA]</scope>
    <source>
        <strain>L48</strain>
    </source>
</reference>
<organism>
    <name type="scientific">Pseudomonas entomophila (strain L48)</name>
    <dbReference type="NCBI Taxonomy" id="384676"/>
    <lineage>
        <taxon>Bacteria</taxon>
        <taxon>Pseudomonadati</taxon>
        <taxon>Pseudomonadota</taxon>
        <taxon>Gammaproteobacteria</taxon>
        <taxon>Pseudomonadales</taxon>
        <taxon>Pseudomonadaceae</taxon>
        <taxon>Pseudomonas</taxon>
    </lineage>
</organism>
<accession>Q1IGX0</accession>
<protein>
    <recommendedName>
        <fullName evidence="1">UPF0391 membrane protein PSEEN0090</fullName>
    </recommendedName>
</protein>
<feature type="chain" id="PRO_0000298598" description="UPF0391 membrane protein PSEEN0090">
    <location>
        <begin position="1"/>
        <end position="53"/>
    </location>
</feature>
<feature type="transmembrane region" description="Helical" evidence="1">
    <location>
        <begin position="4"/>
        <end position="24"/>
    </location>
</feature>
<feature type="transmembrane region" description="Helical" evidence="1">
    <location>
        <begin position="29"/>
        <end position="49"/>
    </location>
</feature>
<gene>
    <name type="ordered locus">PSEEN0090</name>
</gene>